<protein>
    <recommendedName>
        <fullName evidence="1">Thymidine kinase</fullName>
        <ecNumber evidence="1">2.7.1.21</ecNumber>
    </recommendedName>
</protein>
<accession>Q6LT81</accession>
<gene>
    <name evidence="1" type="primary">tdk</name>
    <name type="ordered locus">PBPRA1084</name>
</gene>
<sequence>MAQMYFYYSAMNAGKSTTLLQSSFNYRERGMRPVIFTAAIDDRFGTGKVSSRIGLEEDAELYNKSDDLWSKLSMMHADTHIDCVLIDECQFLTKEQVYQLTEVVDKLHIPVLCYGLRSDFRGELFDGSRYLLSWADKLVELKTICHCGRKANMVIRQDEAGHAIADGDQVEIGGNDRYVSVCRKHYKEALGR</sequence>
<proteinExistence type="inferred from homology"/>
<organism>
    <name type="scientific">Photobacterium profundum (strain SS9)</name>
    <dbReference type="NCBI Taxonomy" id="298386"/>
    <lineage>
        <taxon>Bacteria</taxon>
        <taxon>Pseudomonadati</taxon>
        <taxon>Pseudomonadota</taxon>
        <taxon>Gammaproteobacteria</taxon>
        <taxon>Vibrionales</taxon>
        <taxon>Vibrionaceae</taxon>
        <taxon>Photobacterium</taxon>
    </lineage>
</organism>
<evidence type="ECO:0000255" key="1">
    <source>
        <dbReference type="HAMAP-Rule" id="MF_00124"/>
    </source>
</evidence>
<feature type="chain" id="PRO_0000175004" description="Thymidine kinase">
    <location>
        <begin position="1"/>
        <end position="192"/>
    </location>
</feature>
<feature type="active site" description="Proton acceptor" evidence="1">
    <location>
        <position position="88"/>
    </location>
</feature>
<feature type="binding site" evidence="1">
    <location>
        <begin position="9"/>
        <end position="16"/>
    </location>
    <ligand>
        <name>ATP</name>
        <dbReference type="ChEBI" id="CHEBI:30616"/>
    </ligand>
</feature>
<feature type="binding site" evidence="1">
    <location>
        <begin position="87"/>
        <end position="90"/>
    </location>
    <ligand>
        <name>ATP</name>
        <dbReference type="ChEBI" id="CHEBI:30616"/>
    </ligand>
</feature>
<feature type="binding site" evidence="1">
    <location>
        <position position="145"/>
    </location>
    <ligand>
        <name>Zn(2+)</name>
        <dbReference type="ChEBI" id="CHEBI:29105"/>
    </ligand>
</feature>
<feature type="binding site" evidence="1">
    <location>
        <position position="147"/>
    </location>
    <ligand>
        <name>Zn(2+)</name>
        <dbReference type="ChEBI" id="CHEBI:29105"/>
    </ligand>
</feature>
<feature type="binding site" evidence="1">
    <location>
        <position position="182"/>
    </location>
    <ligand>
        <name>Zn(2+)</name>
        <dbReference type="ChEBI" id="CHEBI:29105"/>
    </ligand>
</feature>
<feature type="binding site" evidence="1">
    <location>
        <position position="185"/>
    </location>
    <ligand>
        <name>Zn(2+)</name>
        <dbReference type="ChEBI" id="CHEBI:29105"/>
    </ligand>
</feature>
<dbReference type="EC" id="2.7.1.21" evidence="1"/>
<dbReference type="EMBL" id="CR378666">
    <property type="protein sequence ID" value="CAG19495.1"/>
    <property type="molecule type" value="Genomic_DNA"/>
</dbReference>
<dbReference type="RefSeq" id="WP_011217828.1">
    <property type="nucleotide sequence ID" value="NC_006370.1"/>
</dbReference>
<dbReference type="SMR" id="Q6LT81"/>
<dbReference type="STRING" id="298386.PBPRA1084"/>
<dbReference type="KEGG" id="ppr:PBPRA1084"/>
<dbReference type="eggNOG" id="COG1435">
    <property type="taxonomic scope" value="Bacteria"/>
</dbReference>
<dbReference type="HOGENOM" id="CLU_064400_2_1_6"/>
<dbReference type="Proteomes" id="UP000000593">
    <property type="component" value="Chromosome 1"/>
</dbReference>
<dbReference type="GO" id="GO:0005829">
    <property type="term" value="C:cytosol"/>
    <property type="evidence" value="ECO:0007669"/>
    <property type="project" value="TreeGrafter"/>
</dbReference>
<dbReference type="GO" id="GO:0005524">
    <property type="term" value="F:ATP binding"/>
    <property type="evidence" value="ECO:0007669"/>
    <property type="project" value="UniProtKB-UniRule"/>
</dbReference>
<dbReference type="GO" id="GO:0004797">
    <property type="term" value="F:thymidine kinase activity"/>
    <property type="evidence" value="ECO:0007669"/>
    <property type="project" value="UniProtKB-UniRule"/>
</dbReference>
<dbReference type="GO" id="GO:0008270">
    <property type="term" value="F:zinc ion binding"/>
    <property type="evidence" value="ECO:0007669"/>
    <property type="project" value="UniProtKB-UniRule"/>
</dbReference>
<dbReference type="GO" id="GO:0071897">
    <property type="term" value="P:DNA biosynthetic process"/>
    <property type="evidence" value="ECO:0007669"/>
    <property type="project" value="UniProtKB-KW"/>
</dbReference>
<dbReference type="GO" id="GO:0046104">
    <property type="term" value="P:thymidine metabolic process"/>
    <property type="evidence" value="ECO:0007669"/>
    <property type="project" value="TreeGrafter"/>
</dbReference>
<dbReference type="FunFam" id="3.30.60.20:FF:000017">
    <property type="entry name" value="Thymidine kinase"/>
    <property type="match status" value="1"/>
</dbReference>
<dbReference type="FunFam" id="3.40.50.300:FF:000323">
    <property type="entry name" value="Thymidine kinase"/>
    <property type="match status" value="1"/>
</dbReference>
<dbReference type="Gene3D" id="3.30.60.20">
    <property type="match status" value="1"/>
</dbReference>
<dbReference type="Gene3D" id="3.40.50.300">
    <property type="entry name" value="P-loop containing nucleotide triphosphate hydrolases"/>
    <property type="match status" value="1"/>
</dbReference>
<dbReference type="HAMAP" id="MF_00124">
    <property type="entry name" value="Thymidine_kinase"/>
    <property type="match status" value="1"/>
</dbReference>
<dbReference type="InterPro" id="IPR027417">
    <property type="entry name" value="P-loop_NTPase"/>
</dbReference>
<dbReference type="InterPro" id="IPR001267">
    <property type="entry name" value="Thymidine_kinase"/>
</dbReference>
<dbReference type="InterPro" id="IPR020633">
    <property type="entry name" value="Thymidine_kinase_CS"/>
</dbReference>
<dbReference type="NCBIfam" id="NF003300">
    <property type="entry name" value="PRK04296.1-5"/>
    <property type="match status" value="1"/>
</dbReference>
<dbReference type="PANTHER" id="PTHR11441">
    <property type="entry name" value="THYMIDINE KINASE"/>
    <property type="match status" value="1"/>
</dbReference>
<dbReference type="PANTHER" id="PTHR11441:SF0">
    <property type="entry name" value="THYMIDINE KINASE, CYTOSOLIC"/>
    <property type="match status" value="1"/>
</dbReference>
<dbReference type="Pfam" id="PF00265">
    <property type="entry name" value="TK"/>
    <property type="match status" value="1"/>
</dbReference>
<dbReference type="PIRSF" id="PIRSF035805">
    <property type="entry name" value="TK_cell"/>
    <property type="match status" value="1"/>
</dbReference>
<dbReference type="SUPFAM" id="SSF57716">
    <property type="entry name" value="Glucocorticoid receptor-like (DNA-binding domain)"/>
    <property type="match status" value="1"/>
</dbReference>
<dbReference type="SUPFAM" id="SSF52540">
    <property type="entry name" value="P-loop containing nucleoside triphosphate hydrolases"/>
    <property type="match status" value="1"/>
</dbReference>
<dbReference type="PROSITE" id="PS00603">
    <property type="entry name" value="TK_CELLULAR_TYPE"/>
    <property type="match status" value="1"/>
</dbReference>
<keyword id="KW-0067">ATP-binding</keyword>
<keyword id="KW-0963">Cytoplasm</keyword>
<keyword id="KW-0237">DNA synthesis</keyword>
<keyword id="KW-0418">Kinase</keyword>
<keyword id="KW-0479">Metal-binding</keyword>
<keyword id="KW-0547">Nucleotide-binding</keyword>
<keyword id="KW-1185">Reference proteome</keyword>
<keyword id="KW-0808">Transferase</keyword>
<keyword id="KW-0862">Zinc</keyword>
<name>KITH_PHOPR</name>
<reference key="1">
    <citation type="journal article" date="2005" name="Science">
        <title>Life at depth: Photobacterium profundum genome sequence and expression analysis.</title>
        <authorList>
            <person name="Vezzi A."/>
            <person name="Campanaro S."/>
            <person name="D'Angelo M."/>
            <person name="Simonato F."/>
            <person name="Vitulo N."/>
            <person name="Lauro F.M."/>
            <person name="Cestaro A."/>
            <person name="Malacrida G."/>
            <person name="Simionati B."/>
            <person name="Cannata N."/>
            <person name="Romualdi C."/>
            <person name="Bartlett D.H."/>
            <person name="Valle G."/>
        </authorList>
    </citation>
    <scope>NUCLEOTIDE SEQUENCE [LARGE SCALE GENOMIC DNA]</scope>
    <source>
        <strain>ATCC BAA-1253 / SS9</strain>
    </source>
</reference>
<comment type="catalytic activity">
    <reaction evidence="1">
        <text>thymidine + ATP = dTMP + ADP + H(+)</text>
        <dbReference type="Rhea" id="RHEA:19129"/>
        <dbReference type="ChEBI" id="CHEBI:15378"/>
        <dbReference type="ChEBI" id="CHEBI:17748"/>
        <dbReference type="ChEBI" id="CHEBI:30616"/>
        <dbReference type="ChEBI" id="CHEBI:63528"/>
        <dbReference type="ChEBI" id="CHEBI:456216"/>
        <dbReference type="EC" id="2.7.1.21"/>
    </reaction>
</comment>
<comment type="subunit">
    <text evidence="1">Homotetramer.</text>
</comment>
<comment type="subcellular location">
    <subcellularLocation>
        <location evidence="1">Cytoplasm</location>
    </subcellularLocation>
</comment>
<comment type="similarity">
    <text evidence="1">Belongs to the thymidine kinase family.</text>
</comment>